<reference key="1">
    <citation type="journal article" date="2007" name="Peptides">
        <title>A new family of antimicrobial peptides from skin secretions of Rana pleuraden.</title>
        <authorList>
            <person name="Wang X."/>
            <person name="Song Y."/>
            <person name="Li J."/>
            <person name="Liu H."/>
            <person name="Xu X."/>
            <person name="Lai R."/>
            <person name="Zhang K."/>
        </authorList>
    </citation>
    <scope>NUCLEOTIDE SEQUENCE [MRNA]</scope>
    <source>
        <tissue>Skin</tissue>
    </source>
</reference>
<name>PLEA3_NIDPL</name>
<dbReference type="EMBL" id="EF621708">
    <property type="protein sequence ID" value="ABU95404.1"/>
    <property type="molecule type" value="mRNA"/>
</dbReference>
<dbReference type="GO" id="GO:0005576">
    <property type="term" value="C:extracellular region"/>
    <property type="evidence" value="ECO:0007669"/>
    <property type="project" value="UniProtKB-SubCell"/>
</dbReference>
<dbReference type="GO" id="GO:0042742">
    <property type="term" value="P:defense response to bacterium"/>
    <property type="evidence" value="ECO:0007669"/>
    <property type="project" value="UniProtKB-KW"/>
</dbReference>
<dbReference type="GO" id="GO:0031640">
    <property type="term" value="P:killing of cells of another organism"/>
    <property type="evidence" value="ECO:0007669"/>
    <property type="project" value="UniProtKB-KW"/>
</dbReference>
<dbReference type="InterPro" id="IPR018247">
    <property type="entry name" value="EF_Hand_1_Ca_BS"/>
</dbReference>
<dbReference type="InterPro" id="IPR004275">
    <property type="entry name" value="Frog_antimicrobial_propeptide"/>
</dbReference>
<dbReference type="Pfam" id="PF03032">
    <property type="entry name" value="FSAP_sig_propep"/>
    <property type="match status" value="1"/>
</dbReference>
<sequence length="69" mass="8056">MFTLKKTLLLLFFLGTISISLCKQARDADEDDGRKMTEEEVKRSIITMTREAKLPQLWKQIACRLYNTC</sequence>
<comment type="function">
    <text evidence="1">Antimicrobial peptide. Has activity against Gram-positive and -negative bacteria, and fungi. Has little hemolytic activity on red blood cells (By similarity).</text>
</comment>
<comment type="subcellular location">
    <subcellularLocation>
        <location evidence="1">Secreted</location>
    </subcellularLocation>
</comment>
<comment type="tissue specificity">
    <text>Expressed by the skin glands.</text>
</comment>
<comment type="similarity">
    <text evidence="3">Belongs to the frog skin active peptide (FSAP) family. Pleurain subfamily.</text>
</comment>
<evidence type="ECO:0000250" key="1"/>
<evidence type="ECO:0000255" key="2"/>
<evidence type="ECO:0000305" key="3"/>
<accession>A8B5P7</accession>
<protein>
    <recommendedName>
        <fullName>Pleurain-A3</fullName>
    </recommendedName>
</protein>
<organism>
    <name type="scientific">Nidirana pleuraden</name>
    <name type="common">Yunnan pond frog</name>
    <name type="synonym">Babina pleuraden</name>
    <dbReference type="NCBI Taxonomy" id="369511"/>
    <lineage>
        <taxon>Eukaryota</taxon>
        <taxon>Metazoa</taxon>
        <taxon>Chordata</taxon>
        <taxon>Craniata</taxon>
        <taxon>Vertebrata</taxon>
        <taxon>Euteleostomi</taxon>
        <taxon>Amphibia</taxon>
        <taxon>Batrachia</taxon>
        <taxon>Anura</taxon>
        <taxon>Neobatrachia</taxon>
        <taxon>Ranoidea</taxon>
        <taxon>Ranidae</taxon>
        <taxon>Nidirana</taxon>
    </lineage>
</organism>
<feature type="signal peptide" evidence="2">
    <location>
        <begin position="1"/>
        <end position="22"/>
    </location>
</feature>
<feature type="propeptide" id="PRO_0000314002" evidence="1">
    <location>
        <begin position="23"/>
        <end position="43"/>
    </location>
</feature>
<feature type="peptide" id="PRO_0000314003" description="Pleurain-A3">
    <location>
        <begin position="44"/>
        <end position="69"/>
    </location>
</feature>
<feature type="disulfide bond" evidence="1">
    <location>
        <begin position="63"/>
        <end position="69"/>
    </location>
</feature>
<keyword id="KW-0878">Amphibian defense peptide</keyword>
<keyword id="KW-0044">Antibiotic</keyword>
<keyword id="KW-0929">Antimicrobial</keyword>
<keyword id="KW-0165">Cleavage on pair of basic residues</keyword>
<keyword id="KW-0204">Cytolysis</keyword>
<keyword id="KW-1015">Disulfide bond</keyword>
<keyword id="KW-0354">Hemolysis</keyword>
<keyword id="KW-0964">Secreted</keyword>
<keyword id="KW-0732">Signal</keyword>
<proteinExistence type="evidence at transcript level"/>